<evidence type="ECO:0000255" key="1">
    <source>
        <dbReference type="HAMAP-Rule" id="MF_01144"/>
    </source>
</evidence>
<protein>
    <recommendedName>
        <fullName evidence="1">UPF0299 membrane protein YpAngola_A3025</fullName>
    </recommendedName>
</protein>
<dbReference type="EMBL" id="CP000901">
    <property type="protein sequence ID" value="ABX88686.1"/>
    <property type="molecule type" value="Genomic_DNA"/>
</dbReference>
<dbReference type="RefSeq" id="WP_002211971.1">
    <property type="nucleotide sequence ID" value="NZ_CP009935.1"/>
</dbReference>
<dbReference type="SMR" id="A9QZM5"/>
<dbReference type="KEGG" id="ypg:YpAngola_A3025"/>
<dbReference type="PATRIC" id="fig|349746.12.peg.4077"/>
<dbReference type="GO" id="GO:0005886">
    <property type="term" value="C:plasma membrane"/>
    <property type="evidence" value="ECO:0007669"/>
    <property type="project" value="UniProtKB-SubCell"/>
</dbReference>
<dbReference type="HAMAP" id="MF_01144">
    <property type="entry name" value="UPF0299"/>
    <property type="match status" value="1"/>
</dbReference>
<dbReference type="InterPro" id="IPR005538">
    <property type="entry name" value="LrgA/CidA"/>
</dbReference>
<dbReference type="InterPro" id="IPR022957">
    <property type="entry name" value="Uncharacterised_UPF0299"/>
</dbReference>
<dbReference type="NCBIfam" id="NF002494">
    <property type="entry name" value="PRK01821.1"/>
    <property type="match status" value="1"/>
</dbReference>
<dbReference type="PANTHER" id="PTHR33931">
    <property type="entry name" value="HOLIN-LIKE PROTEIN CIDA-RELATED"/>
    <property type="match status" value="1"/>
</dbReference>
<dbReference type="PANTHER" id="PTHR33931:SF5">
    <property type="entry name" value="UPF0299 MEMBRANE PROTEIN YOHJ"/>
    <property type="match status" value="1"/>
</dbReference>
<dbReference type="Pfam" id="PF03788">
    <property type="entry name" value="LrgA"/>
    <property type="match status" value="1"/>
</dbReference>
<keyword id="KW-0997">Cell inner membrane</keyword>
<keyword id="KW-1003">Cell membrane</keyword>
<keyword id="KW-0472">Membrane</keyword>
<keyword id="KW-0812">Transmembrane</keyword>
<keyword id="KW-1133">Transmembrane helix</keyword>
<comment type="subcellular location">
    <subcellularLocation>
        <location evidence="1">Cell inner membrane</location>
        <topology evidence="1">Multi-pass membrane protein</topology>
    </subcellularLocation>
</comment>
<comment type="similarity">
    <text evidence="1">Belongs to the UPF0299 family.</text>
</comment>
<reference key="1">
    <citation type="journal article" date="2010" name="J. Bacteriol.">
        <title>Genome sequence of the deep-rooted Yersinia pestis strain Angola reveals new insights into the evolution and pangenome of the plague bacterium.</title>
        <authorList>
            <person name="Eppinger M."/>
            <person name="Worsham P.L."/>
            <person name="Nikolich M.P."/>
            <person name="Riley D.R."/>
            <person name="Sebastian Y."/>
            <person name="Mou S."/>
            <person name="Achtman M."/>
            <person name="Lindler L.E."/>
            <person name="Ravel J."/>
        </authorList>
    </citation>
    <scope>NUCLEOTIDE SEQUENCE [LARGE SCALE GENOMIC DNA]</scope>
    <source>
        <strain>Angola</strain>
    </source>
</reference>
<name>Y3025_YERPG</name>
<gene>
    <name type="ordered locus">YpAngola_A3025</name>
</gene>
<sequence length="135" mass="15294">MRNMMSLCWQYLRAFTIIYLCLWAGKALALLLPIVIPGSIIGMLILFVLLTLQILPSPWVKPSCQLLIRYMALLFVPIGVGVMQYYEQLTKQFGPIVVSCFISTLIVMLVVAYSSHYVHRDRKVISPSTPTEGEK</sequence>
<feature type="chain" id="PRO_1000137377" description="UPF0299 membrane protein YpAngola_A3025">
    <location>
        <begin position="1"/>
        <end position="135"/>
    </location>
</feature>
<feature type="transmembrane region" description="Helical" evidence="1">
    <location>
        <begin position="30"/>
        <end position="50"/>
    </location>
</feature>
<feature type="transmembrane region" description="Helical" evidence="1">
    <location>
        <begin position="66"/>
        <end position="86"/>
    </location>
</feature>
<feature type="transmembrane region" description="Helical" evidence="1">
    <location>
        <begin position="93"/>
        <end position="113"/>
    </location>
</feature>
<organism>
    <name type="scientific">Yersinia pestis bv. Antiqua (strain Angola)</name>
    <dbReference type="NCBI Taxonomy" id="349746"/>
    <lineage>
        <taxon>Bacteria</taxon>
        <taxon>Pseudomonadati</taxon>
        <taxon>Pseudomonadota</taxon>
        <taxon>Gammaproteobacteria</taxon>
        <taxon>Enterobacterales</taxon>
        <taxon>Yersiniaceae</taxon>
        <taxon>Yersinia</taxon>
    </lineage>
</organism>
<accession>A9QZM5</accession>
<proteinExistence type="inferred from homology"/>